<sequence length="177" mass="19861">MDTTQVTLIHQILAAADERNLPLWIGGGWAIDARLGRVTRKHDDIDLTFPGERRGELEAMVEMLGGRVTEELDYGFLAEIGDELLDCEPAWWADEAYEIAEAPQGSCPEAAEGVIAGRPVRCNSWEAIIWDYFYYADEVPPVDWPTKHIESYRLACTSLGAEKVEVLRAAFRSRYAA</sequence>
<proteinExistence type="inferred from homology"/>
<dbReference type="EC" id="2.7.7.46"/>
<dbReference type="EMBL" id="X64369">
    <property type="protein sequence ID" value="CAA45722.1"/>
    <property type="molecule type" value="Genomic_DNA"/>
</dbReference>
<dbReference type="PIR" id="S19940">
    <property type="entry name" value="XNKBLS"/>
</dbReference>
<dbReference type="RefSeq" id="WP_000381803.1">
    <property type="nucleotide sequence ID" value="NZ_PTFF02000031.1"/>
</dbReference>
<dbReference type="SMR" id="P29806"/>
<dbReference type="GO" id="GO:0008871">
    <property type="term" value="F:aminoglycoside 2''-nucleotidyltransferase activity"/>
    <property type="evidence" value="ECO:0007669"/>
    <property type="project" value="UniProtKB-EC"/>
</dbReference>
<dbReference type="GO" id="GO:0046872">
    <property type="term" value="F:metal ion binding"/>
    <property type="evidence" value="ECO:0007669"/>
    <property type="project" value="UniProtKB-KW"/>
</dbReference>
<dbReference type="GO" id="GO:0046677">
    <property type="term" value="P:response to antibiotic"/>
    <property type="evidence" value="ECO:0007669"/>
    <property type="project" value="UniProtKB-KW"/>
</dbReference>
<dbReference type="Gene3D" id="3.30.460.40">
    <property type="match status" value="1"/>
</dbReference>
<dbReference type="InterPro" id="IPR019646">
    <property type="entry name" value="Aminoglyc_AdlTrfase"/>
</dbReference>
<dbReference type="NCBIfam" id="NF000064">
    <property type="entry name" value="ANT_2pp_Ia"/>
    <property type="match status" value="1"/>
</dbReference>
<dbReference type="Pfam" id="PF10706">
    <property type="entry name" value="Aminoglyc_resit"/>
    <property type="match status" value="1"/>
</dbReference>
<accession>P29806</accession>
<name>AADB2_KLEPN</name>
<evidence type="ECO:0000250" key="1">
    <source>
        <dbReference type="UniProtKB" id="P0AE05"/>
    </source>
</evidence>
<geneLocation type="plasmid">
    <name>pLST1000</name>
</geneLocation>
<keyword id="KW-0046">Antibiotic resistance</keyword>
<keyword id="KW-0460">Magnesium</keyword>
<keyword id="KW-0479">Metal-binding</keyword>
<keyword id="KW-0548">Nucleotidyltransferase</keyword>
<keyword id="KW-0614">Plasmid</keyword>
<keyword id="KW-0808">Transferase</keyword>
<feature type="chain" id="PRO_0000068558" description="2''-aminoglycoside nucleotidyltransferase">
    <location>
        <begin position="1"/>
        <end position="177"/>
    </location>
</feature>
<feature type="active site" description="Proton acceptor" evidence="1">
    <location>
        <position position="86"/>
    </location>
</feature>
<feature type="binding site" evidence="1">
    <location>
        <position position="44"/>
    </location>
    <ligand>
        <name>Mg(2+)</name>
        <dbReference type="ChEBI" id="CHEBI:18420"/>
        <label>1</label>
    </ligand>
</feature>
<feature type="binding site" evidence="1">
    <location>
        <position position="44"/>
    </location>
    <ligand>
        <name>Mg(2+)</name>
        <dbReference type="ChEBI" id="CHEBI:18420"/>
        <label>2</label>
    </ligand>
</feature>
<feature type="binding site" evidence="1">
    <location>
        <position position="46"/>
    </location>
    <ligand>
        <name>Mg(2+)</name>
        <dbReference type="ChEBI" id="CHEBI:18420"/>
        <label>1</label>
    </ligand>
</feature>
<feature type="binding site" evidence="1">
    <location>
        <position position="46"/>
    </location>
    <ligand>
        <name>Mg(2+)</name>
        <dbReference type="ChEBI" id="CHEBI:18420"/>
        <label>2</label>
    </ligand>
</feature>
<feature type="binding site" evidence="1">
    <location>
        <position position="86"/>
    </location>
    <ligand>
        <name>Mg(2+)</name>
        <dbReference type="ChEBI" id="CHEBI:18420"/>
        <label>2</label>
    </ligand>
</feature>
<comment type="function">
    <text evidence="1">Mediates bacterial resistance to kanamycin, gentamicin, dibekacin, sisomicin, neomycin and tobramycin by adenylating the 2''-hydroxyl group of these antibiotics.</text>
</comment>
<comment type="catalytic activity">
    <reaction evidence="1">
        <text>nucleoside triphosphate + gentamicin = diphosphate + 2''-nucleotidylgentamicin.</text>
        <dbReference type="EC" id="2.7.7.46"/>
    </reaction>
</comment>
<comment type="cofactor">
    <cofactor evidence="1">
        <name>Mg(2+)</name>
        <dbReference type="ChEBI" id="CHEBI:18420"/>
    </cofactor>
    <text evidence="1">Binds 2 Mg(2+).</text>
</comment>
<gene>
    <name type="primary">aadB</name>
</gene>
<protein>
    <recommendedName>
        <fullName>2''-aminoglycoside nucleotidyltransferase</fullName>
        <ecNumber>2.7.7.46</ecNumber>
    </recommendedName>
    <alternativeName>
        <fullName>AAD(2'')</fullName>
    </alternativeName>
    <alternativeName>
        <fullName>Gentamicin 2''-nucleotidyltransferase</fullName>
    </alternativeName>
    <alternativeName>
        <fullName>Gentamicin resistance protein</fullName>
    </alternativeName>
</protein>
<organism>
    <name type="scientific">Klebsiella pneumoniae</name>
    <dbReference type="NCBI Taxonomy" id="573"/>
    <lineage>
        <taxon>Bacteria</taxon>
        <taxon>Pseudomonadati</taxon>
        <taxon>Pseudomonadota</taxon>
        <taxon>Gammaproteobacteria</taxon>
        <taxon>Enterobacterales</taxon>
        <taxon>Enterobacteriaceae</taxon>
        <taxon>Klebsiella/Raoultella group</taxon>
        <taxon>Klebsiella</taxon>
        <taxon>Klebsiella pneumoniae complex</taxon>
    </lineage>
</organism>
<reference key="1">
    <citation type="submission" date="1992-02" db="EMBL/GenBank/DDBJ databases">
        <authorList>
            <person name="Zieg J."/>
            <person name="Jiang H."/>
            <person name="McCabe F."/>
            <person name="O'Brien T."/>
        </authorList>
    </citation>
    <scope>NUCLEOTIDE SEQUENCE [GENOMIC DNA]</scope>
</reference>